<comment type="function">
    <text evidence="1">Mitochondrial membrane ATP synthase (F(1)F(0) ATP synthase or Complex V) produces ATP from ADP in the presence of a proton gradient across the membrane which is generated by electron transport complexes of the respiratory chain. F-type ATPases consist of two structural domains, F(1) - containing the extramembraneous catalytic core and F(0) - containing the membrane proton channel, linked together by a central stalk and a peripheral stalk. During catalysis, ATP synthesis in the catalytic domain of F(1) is coupled via a rotary mechanism of the central stalk subunits to proton translocation. Part of the complex F(0) domain. Minor subunit located with subunit a in the membrane (By similarity).</text>
</comment>
<comment type="subunit">
    <text evidence="2">F-type ATPases have 2 components, CF(1) - the catalytic core - and CF(0) - the membrane proton channel. Component of an ATP synthase complex composed of ATP5PB, ATP5MC1, ATP5F1E, ATP5PD, ATP5ME, ATP5PF, ATP5MF, MT-ATP6, MT-ATP8, ATP5F1A, ATP5F1B, ATP5F1D, ATP5F1C, ATP5PO, ATP5MG, ATP5MK and ATP5MJ (By similarity). Interacts with PRICKLE3 (By similarity).</text>
</comment>
<comment type="subcellular location">
    <subcellularLocation>
        <location>Mitochondrion membrane</location>
        <topology>Single-pass membrane protein</topology>
    </subcellularLocation>
</comment>
<comment type="similarity">
    <text evidence="5">Belongs to the ATPase protein 8 family.</text>
</comment>
<proteinExistence type="inferred from homology"/>
<feature type="chain" id="PRO_0000195505" description="ATP synthase protein 8">
    <location>
        <begin position="1"/>
        <end position="66"/>
    </location>
</feature>
<feature type="transmembrane region" description="Helical" evidence="4">
    <location>
        <begin position="8"/>
        <end position="24"/>
    </location>
</feature>
<feature type="modified residue" description="N6-acetyllysine; alternate" evidence="3">
    <location>
        <position position="54"/>
    </location>
</feature>
<feature type="modified residue" description="N6-succinyllysine; alternate" evidence="3">
    <location>
        <position position="54"/>
    </location>
</feature>
<feature type="modified residue" description="N6-acetyllysine" evidence="3">
    <location>
        <position position="57"/>
    </location>
</feature>
<reference key="1">
    <citation type="journal article" date="1999" name="J. Anim. Sci.">
        <title>Rapid communication: nucleotide sequence of chamois, alpine ibex, and red deer tRNA(Lys) and ATPase8 mitochondrial genes.</title>
        <authorList>
            <person name="Saulle E."/>
            <person name="Di Pasquale S."/>
            <person name="Tartaglia M."/>
        </authorList>
    </citation>
    <scope>NUCLEOTIDE SEQUENCE [GENOMIC DNA]</scope>
    <source>
        <tissue>Peripheral blood</tissue>
    </source>
</reference>
<dbReference type="EMBL" id="AF104683">
    <property type="protein sequence ID" value="AAF43484.1"/>
    <property type="molecule type" value="Genomic_DNA"/>
</dbReference>
<dbReference type="SMR" id="Q9MQJ9"/>
<dbReference type="GO" id="GO:0031966">
    <property type="term" value="C:mitochondrial membrane"/>
    <property type="evidence" value="ECO:0007669"/>
    <property type="project" value="UniProtKB-SubCell"/>
</dbReference>
<dbReference type="GO" id="GO:0045259">
    <property type="term" value="C:proton-transporting ATP synthase complex"/>
    <property type="evidence" value="ECO:0000250"/>
    <property type="project" value="UniProtKB"/>
</dbReference>
<dbReference type="GO" id="GO:0015078">
    <property type="term" value="F:proton transmembrane transporter activity"/>
    <property type="evidence" value="ECO:0007669"/>
    <property type="project" value="InterPro"/>
</dbReference>
<dbReference type="GO" id="GO:0015986">
    <property type="term" value="P:proton motive force-driven ATP synthesis"/>
    <property type="evidence" value="ECO:0007669"/>
    <property type="project" value="InterPro"/>
</dbReference>
<dbReference type="InterPro" id="IPR039017">
    <property type="entry name" value="ATP8_mammal"/>
</dbReference>
<dbReference type="InterPro" id="IPR001421">
    <property type="entry name" value="ATP8_metazoa"/>
</dbReference>
<dbReference type="PANTHER" id="PTHR13722">
    <property type="entry name" value="ATP SYNTHASE PROTEIN 8"/>
    <property type="match status" value="1"/>
</dbReference>
<dbReference type="PANTHER" id="PTHR13722:SF0">
    <property type="entry name" value="ATP SYNTHASE PROTEIN 8"/>
    <property type="match status" value="1"/>
</dbReference>
<dbReference type="Pfam" id="PF00895">
    <property type="entry name" value="ATP-synt_8"/>
    <property type="match status" value="1"/>
</dbReference>
<organism>
    <name type="scientific">Cervus elaphus hippelaphus</name>
    <name type="common">European red deer</name>
    <dbReference type="NCBI Taxonomy" id="46360"/>
    <lineage>
        <taxon>Eukaryota</taxon>
        <taxon>Metazoa</taxon>
        <taxon>Chordata</taxon>
        <taxon>Craniata</taxon>
        <taxon>Vertebrata</taxon>
        <taxon>Euteleostomi</taxon>
        <taxon>Mammalia</taxon>
        <taxon>Eutheria</taxon>
        <taxon>Laurasiatheria</taxon>
        <taxon>Artiodactyla</taxon>
        <taxon>Ruminantia</taxon>
        <taxon>Pecora</taxon>
        <taxon>Cervidae</taxon>
        <taxon>Cervinae</taxon>
        <taxon>Cervus</taxon>
    </lineage>
</organism>
<name>ATP8_CEREH</name>
<evidence type="ECO:0000250" key="1"/>
<evidence type="ECO:0000250" key="2">
    <source>
        <dbReference type="UniProtKB" id="P03928"/>
    </source>
</evidence>
<evidence type="ECO:0000250" key="3">
    <source>
        <dbReference type="UniProtKB" id="P03930"/>
    </source>
</evidence>
<evidence type="ECO:0000255" key="4"/>
<evidence type="ECO:0000305" key="5"/>
<gene>
    <name type="primary">MT-ATP8</name>
    <name type="synonym">ATP8</name>
    <name type="synonym">ATPASE8</name>
    <name type="synonym">MTATP8</name>
</gene>
<accession>Q9MQJ9</accession>
<sequence length="66" mass="7983">MPQLDTSTWLMMIMSMFLALFIIFQLKISKHNFHFNPELTLTKTQKQKTPWETKWTKIYLPLLLPQ</sequence>
<protein>
    <recommendedName>
        <fullName>ATP synthase protein 8</fullName>
    </recommendedName>
    <alternativeName>
        <fullName>A6L</fullName>
    </alternativeName>
    <alternativeName>
        <fullName>F-ATPase subunit 8</fullName>
    </alternativeName>
</protein>
<keyword id="KW-0007">Acetylation</keyword>
<keyword id="KW-0066">ATP synthesis</keyword>
<keyword id="KW-0138">CF(0)</keyword>
<keyword id="KW-0375">Hydrogen ion transport</keyword>
<keyword id="KW-0406">Ion transport</keyword>
<keyword id="KW-0472">Membrane</keyword>
<keyword id="KW-0496">Mitochondrion</keyword>
<keyword id="KW-0812">Transmembrane</keyword>
<keyword id="KW-1133">Transmembrane helix</keyword>
<keyword id="KW-0813">Transport</keyword>
<geneLocation type="mitochondrion"/>